<keyword id="KW-0414">Isoprene biosynthesis</keyword>
<keyword id="KW-0464">Manganese</keyword>
<keyword id="KW-0479">Metal-binding</keyword>
<keyword id="KW-0521">NADP</keyword>
<keyword id="KW-0560">Oxidoreductase</keyword>
<keyword id="KW-1185">Reference proteome</keyword>
<dbReference type="EC" id="1.1.1.267" evidence="1"/>
<dbReference type="EMBL" id="AE003852">
    <property type="protein sequence ID" value="AAF95398.1"/>
    <property type="molecule type" value="Genomic_DNA"/>
</dbReference>
<dbReference type="PIR" id="D82099">
    <property type="entry name" value="D82099"/>
</dbReference>
<dbReference type="RefSeq" id="NP_231885.1">
    <property type="nucleotide sequence ID" value="NC_002505.1"/>
</dbReference>
<dbReference type="SMR" id="Q9KPV8"/>
<dbReference type="STRING" id="243277.VC_2254"/>
<dbReference type="DNASU" id="2613176"/>
<dbReference type="EnsemblBacteria" id="AAF95398">
    <property type="protein sequence ID" value="AAF95398"/>
    <property type="gene ID" value="VC_2254"/>
</dbReference>
<dbReference type="KEGG" id="vch:VC_2254"/>
<dbReference type="PATRIC" id="fig|243277.26.peg.2150"/>
<dbReference type="eggNOG" id="COG0743">
    <property type="taxonomic scope" value="Bacteria"/>
</dbReference>
<dbReference type="HOGENOM" id="CLU_035714_4_0_6"/>
<dbReference type="UniPathway" id="UPA00056">
    <property type="reaction ID" value="UER00092"/>
</dbReference>
<dbReference type="Proteomes" id="UP000000584">
    <property type="component" value="Chromosome 1"/>
</dbReference>
<dbReference type="GO" id="GO:0030604">
    <property type="term" value="F:1-deoxy-D-xylulose-5-phosphate reductoisomerase activity"/>
    <property type="evidence" value="ECO:0000318"/>
    <property type="project" value="GO_Central"/>
</dbReference>
<dbReference type="GO" id="GO:0030145">
    <property type="term" value="F:manganese ion binding"/>
    <property type="evidence" value="ECO:0000318"/>
    <property type="project" value="GO_Central"/>
</dbReference>
<dbReference type="GO" id="GO:0070402">
    <property type="term" value="F:NADPH binding"/>
    <property type="evidence" value="ECO:0000318"/>
    <property type="project" value="GO_Central"/>
</dbReference>
<dbReference type="GO" id="GO:0051484">
    <property type="term" value="P:isopentenyl diphosphate biosynthetic process, methylerythritol 4-phosphate pathway involved in terpenoid biosynthetic process"/>
    <property type="evidence" value="ECO:0000318"/>
    <property type="project" value="GO_Central"/>
</dbReference>
<dbReference type="FunFam" id="1.10.1740.10:FF:000004">
    <property type="entry name" value="1-deoxy-D-xylulose 5-phosphate reductoisomerase"/>
    <property type="match status" value="1"/>
</dbReference>
<dbReference type="FunFam" id="3.40.50.720:FF:000045">
    <property type="entry name" value="1-deoxy-D-xylulose 5-phosphate reductoisomerase"/>
    <property type="match status" value="1"/>
</dbReference>
<dbReference type="Gene3D" id="1.10.1740.10">
    <property type="match status" value="1"/>
</dbReference>
<dbReference type="Gene3D" id="3.40.50.720">
    <property type="entry name" value="NAD(P)-binding Rossmann-like Domain"/>
    <property type="match status" value="1"/>
</dbReference>
<dbReference type="HAMAP" id="MF_00183">
    <property type="entry name" value="DXP_reductoisom"/>
    <property type="match status" value="1"/>
</dbReference>
<dbReference type="InterPro" id="IPR003821">
    <property type="entry name" value="DXP_reductoisomerase"/>
</dbReference>
<dbReference type="InterPro" id="IPR013644">
    <property type="entry name" value="DXP_reductoisomerase_C"/>
</dbReference>
<dbReference type="InterPro" id="IPR013512">
    <property type="entry name" value="DXP_reductoisomerase_N"/>
</dbReference>
<dbReference type="InterPro" id="IPR026877">
    <property type="entry name" value="DXPR_C"/>
</dbReference>
<dbReference type="InterPro" id="IPR036169">
    <property type="entry name" value="DXPR_C_sf"/>
</dbReference>
<dbReference type="InterPro" id="IPR036291">
    <property type="entry name" value="NAD(P)-bd_dom_sf"/>
</dbReference>
<dbReference type="NCBIfam" id="TIGR00243">
    <property type="entry name" value="Dxr"/>
    <property type="match status" value="1"/>
</dbReference>
<dbReference type="NCBIfam" id="NF003938">
    <property type="entry name" value="PRK05447.1-1"/>
    <property type="match status" value="1"/>
</dbReference>
<dbReference type="NCBIfam" id="NF009114">
    <property type="entry name" value="PRK12464.1"/>
    <property type="match status" value="1"/>
</dbReference>
<dbReference type="PANTHER" id="PTHR30525">
    <property type="entry name" value="1-DEOXY-D-XYLULOSE 5-PHOSPHATE REDUCTOISOMERASE"/>
    <property type="match status" value="1"/>
</dbReference>
<dbReference type="PANTHER" id="PTHR30525:SF0">
    <property type="entry name" value="1-DEOXY-D-XYLULOSE 5-PHOSPHATE REDUCTOISOMERASE, CHLOROPLASTIC"/>
    <property type="match status" value="1"/>
</dbReference>
<dbReference type="Pfam" id="PF08436">
    <property type="entry name" value="DXP_redisom_C"/>
    <property type="match status" value="1"/>
</dbReference>
<dbReference type="Pfam" id="PF02670">
    <property type="entry name" value="DXP_reductoisom"/>
    <property type="match status" value="1"/>
</dbReference>
<dbReference type="Pfam" id="PF13288">
    <property type="entry name" value="DXPR_C"/>
    <property type="match status" value="1"/>
</dbReference>
<dbReference type="PIRSF" id="PIRSF006205">
    <property type="entry name" value="Dxp_reductismrs"/>
    <property type="match status" value="1"/>
</dbReference>
<dbReference type="SUPFAM" id="SSF69055">
    <property type="entry name" value="1-deoxy-D-xylulose-5-phosphate reductoisomerase, C-terminal domain"/>
    <property type="match status" value="1"/>
</dbReference>
<dbReference type="SUPFAM" id="SSF55347">
    <property type="entry name" value="Glyceraldehyde-3-phosphate dehydrogenase-like, C-terminal domain"/>
    <property type="match status" value="1"/>
</dbReference>
<dbReference type="SUPFAM" id="SSF51735">
    <property type="entry name" value="NAD(P)-binding Rossmann-fold domains"/>
    <property type="match status" value="1"/>
</dbReference>
<reference key="1">
    <citation type="journal article" date="2000" name="Nature">
        <title>DNA sequence of both chromosomes of the cholera pathogen Vibrio cholerae.</title>
        <authorList>
            <person name="Heidelberg J.F."/>
            <person name="Eisen J.A."/>
            <person name="Nelson W.C."/>
            <person name="Clayton R.A."/>
            <person name="Gwinn M.L."/>
            <person name="Dodson R.J."/>
            <person name="Haft D.H."/>
            <person name="Hickey E.K."/>
            <person name="Peterson J.D."/>
            <person name="Umayam L.A."/>
            <person name="Gill S.R."/>
            <person name="Nelson K.E."/>
            <person name="Read T.D."/>
            <person name="Tettelin H."/>
            <person name="Richardson D.L."/>
            <person name="Ermolaeva M.D."/>
            <person name="Vamathevan J.J."/>
            <person name="Bass S."/>
            <person name="Qin H."/>
            <person name="Dragoi I."/>
            <person name="Sellers P."/>
            <person name="McDonald L.A."/>
            <person name="Utterback T.R."/>
            <person name="Fleischmann R.D."/>
            <person name="Nierman W.C."/>
            <person name="White O."/>
            <person name="Salzberg S.L."/>
            <person name="Smith H.O."/>
            <person name="Colwell R.R."/>
            <person name="Mekalanos J.J."/>
            <person name="Venter J.C."/>
            <person name="Fraser C.M."/>
        </authorList>
    </citation>
    <scope>NUCLEOTIDE SEQUENCE [LARGE SCALE GENOMIC DNA]</scope>
    <source>
        <strain>ATCC 39315 / El Tor Inaba N16961</strain>
    </source>
</reference>
<accession>Q9KPV8</accession>
<sequence>MRKLTILGATGSIGASTLKVIAQNPQQFSIVALVAGVNVAKMYQLCQQWRPKYAVMATASAASELQGLLKNQAMATEVLYGEEAMCQVAALDDVDTVMAAIVGAAGLLPTMAAVKAGKRVLLANKEALVMSGQLFIDAVAQSGAELMPVDSEHNAIFQCLPTEIQTQLGRCDLSQHGIDHILLTGSGGPFRYSDLATLDSVTPEQAIAHPNWSMGPKISVDSATMMNKGLEYIEAKWLFNTSREQLKVLIHPQSVIHSMVQYQDGSVIAQLGEPDMATPISYAMAYPERVTAGVPALDFTRLQQLTFMEVDFARYPCLQLAMDACFLGQHATTSLNAANEVAVDAFLKRKIRFTDIALINDQVLSKVCATNTQLHCRDLESLLELDTMARHFAHQVLKERQA</sequence>
<name>DXR_VIBCH</name>
<feature type="chain" id="PRO_0000163730" description="1-deoxy-D-xylulose 5-phosphate reductoisomerase">
    <location>
        <begin position="1"/>
        <end position="402"/>
    </location>
</feature>
<feature type="binding site" evidence="1">
    <location>
        <position position="10"/>
    </location>
    <ligand>
        <name>NADPH</name>
        <dbReference type="ChEBI" id="CHEBI:57783"/>
    </ligand>
</feature>
<feature type="binding site" evidence="1">
    <location>
        <position position="11"/>
    </location>
    <ligand>
        <name>NADPH</name>
        <dbReference type="ChEBI" id="CHEBI:57783"/>
    </ligand>
</feature>
<feature type="binding site" evidence="1">
    <location>
        <position position="12"/>
    </location>
    <ligand>
        <name>NADPH</name>
        <dbReference type="ChEBI" id="CHEBI:57783"/>
    </ligand>
</feature>
<feature type="binding site" evidence="1">
    <location>
        <position position="13"/>
    </location>
    <ligand>
        <name>NADPH</name>
        <dbReference type="ChEBI" id="CHEBI:57783"/>
    </ligand>
</feature>
<feature type="binding site" evidence="1">
    <location>
        <position position="36"/>
    </location>
    <ligand>
        <name>NADPH</name>
        <dbReference type="ChEBI" id="CHEBI:57783"/>
    </ligand>
</feature>
<feature type="binding site" evidence="1">
    <location>
        <position position="38"/>
    </location>
    <ligand>
        <name>NADPH</name>
        <dbReference type="ChEBI" id="CHEBI:57783"/>
    </ligand>
</feature>
<feature type="binding site" evidence="1">
    <location>
        <position position="124"/>
    </location>
    <ligand>
        <name>NADPH</name>
        <dbReference type="ChEBI" id="CHEBI:57783"/>
    </ligand>
</feature>
<feature type="binding site" evidence="1">
    <location>
        <position position="125"/>
    </location>
    <ligand>
        <name>1-deoxy-D-xylulose 5-phosphate</name>
        <dbReference type="ChEBI" id="CHEBI:57792"/>
    </ligand>
</feature>
<feature type="binding site" evidence="1">
    <location>
        <position position="126"/>
    </location>
    <ligand>
        <name>NADPH</name>
        <dbReference type="ChEBI" id="CHEBI:57783"/>
    </ligand>
</feature>
<feature type="binding site" evidence="1">
    <location>
        <position position="150"/>
    </location>
    <ligand>
        <name>Mn(2+)</name>
        <dbReference type="ChEBI" id="CHEBI:29035"/>
    </ligand>
</feature>
<feature type="binding site" evidence="1">
    <location>
        <position position="151"/>
    </location>
    <ligand>
        <name>1-deoxy-D-xylulose 5-phosphate</name>
        <dbReference type="ChEBI" id="CHEBI:57792"/>
    </ligand>
</feature>
<feature type="binding site" evidence="1">
    <location>
        <position position="152"/>
    </location>
    <ligand>
        <name>1-deoxy-D-xylulose 5-phosphate</name>
        <dbReference type="ChEBI" id="CHEBI:57792"/>
    </ligand>
</feature>
<feature type="binding site" evidence="1">
    <location>
        <position position="152"/>
    </location>
    <ligand>
        <name>Mn(2+)</name>
        <dbReference type="ChEBI" id="CHEBI:29035"/>
    </ligand>
</feature>
<feature type="binding site" evidence="1">
    <location>
        <position position="186"/>
    </location>
    <ligand>
        <name>1-deoxy-D-xylulose 5-phosphate</name>
        <dbReference type="ChEBI" id="CHEBI:57792"/>
    </ligand>
</feature>
<feature type="binding site" evidence="1">
    <location>
        <position position="209"/>
    </location>
    <ligand>
        <name>1-deoxy-D-xylulose 5-phosphate</name>
        <dbReference type="ChEBI" id="CHEBI:57792"/>
    </ligand>
</feature>
<feature type="binding site" evidence="1">
    <location>
        <position position="215"/>
    </location>
    <ligand>
        <name>NADPH</name>
        <dbReference type="ChEBI" id="CHEBI:57783"/>
    </ligand>
</feature>
<feature type="binding site" evidence="1">
    <location>
        <position position="222"/>
    </location>
    <ligand>
        <name>1-deoxy-D-xylulose 5-phosphate</name>
        <dbReference type="ChEBI" id="CHEBI:57792"/>
    </ligand>
</feature>
<feature type="binding site" evidence="1">
    <location>
        <position position="227"/>
    </location>
    <ligand>
        <name>1-deoxy-D-xylulose 5-phosphate</name>
        <dbReference type="ChEBI" id="CHEBI:57792"/>
    </ligand>
</feature>
<feature type="binding site" evidence="1">
    <location>
        <position position="228"/>
    </location>
    <ligand>
        <name>1-deoxy-D-xylulose 5-phosphate</name>
        <dbReference type="ChEBI" id="CHEBI:57792"/>
    </ligand>
</feature>
<feature type="binding site" evidence="1">
    <location>
        <position position="231"/>
    </location>
    <ligand>
        <name>1-deoxy-D-xylulose 5-phosphate</name>
        <dbReference type="ChEBI" id="CHEBI:57792"/>
    </ligand>
</feature>
<feature type="binding site" evidence="1">
    <location>
        <position position="231"/>
    </location>
    <ligand>
        <name>Mn(2+)</name>
        <dbReference type="ChEBI" id="CHEBI:29035"/>
    </ligand>
</feature>
<evidence type="ECO:0000255" key="1">
    <source>
        <dbReference type="HAMAP-Rule" id="MF_00183"/>
    </source>
</evidence>
<organism>
    <name type="scientific">Vibrio cholerae serotype O1 (strain ATCC 39315 / El Tor Inaba N16961)</name>
    <dbReference type="NCBI Taxonomy" id="243277"/>
    <lineage>
        <taxon>Bacteria</taxon>
        <taxon>Pseudomonadati</taxon>
        <taxon>Pseudomonadota</taxon>
        <taxon>Gammaproteobacteria</taxon>
        <taxon>Vibrionales</taxon>
        <taxon>Vibrionaceae</taxon>
        <taxon>Vibrio</taxon>
    </lineage>
</organism>
<comment type="function">
    <text evidence="1">Catalyzes the NADPH-dependent rearrangement and reduction of 1-deoxy-D-xylulose-5-phosphate (DXP) to 2-C-methyl-D-erythritol 4-phosphate (MEP).</text>
</comment>
<comment type="catalytic activity">
    <reaction evidence="1">
        <text>2-C-methyl-D-erythritol 4-phosphate + NADP(+) = 1-deoxy-D-xylulose 5-phosphate + NADPH + H(+)</text>
        <dbReference type="Rhea" id="RHEA:13717"/>
        <dbReference type="ChEBI" id="CHEBI:15378"/>
        <dbReference type="ChEBI" id="CHEBI:57783"/>
        <dbReference type="ChEBI" id="CHEBI:57792"/>
        <dbReference type="ChEBI" id="CHEBI:58262"/>
        <dbReference type="ChEBI" id="CHEBI:58349"/>
        <dbReference type="EC" id="1.1.1.267"/>
    </reaction>
    <physiologicalReaction direction="right-to-left" evidence="1">
        <dbReference type="Rhea" id="RHEA:13719"/>
    </physiologicalReaction>
</comment>
<comment type="cofactor">
    <cofactor evidence="1">
        <name>Mg(2+)</name>
        <dbReference type="ChEBI" id="CHEBI:18420"/>
    </cofactor>
    <cofactor evidence="1">
        <name>Mn(2+)</name>
        <dbReference type="ChEBI" id="CHEBI:29035"/>
    </cofactor>
</comment>
<comment type="pathway">
    <text evidence="1">Isoprenoid biosynthesis; isopentenyl diphosphate biosynthesis via DXP pathway; isopentenyl diphosphate from 1-deoxy-D-xylulose 5-phosphate: step 1/6.</text>
</comment>
<comment type="similarity">
    <text evidence="1">Belongs to the DXR family.</text>
</comment>
<gene>
    <name evidence="1" type="primary">dxr</name>
    <name type="ordered locus">VC_2254</name>
</gene>
<protein>
    <recommendedName>
        <fullName evidence="1">1-deoxy-D-xylulose 5-phosphate reductoisomerase</fullName>
        <shortName evidence="1">DXP reductoisomerase</shortName>
        <ecNumber evidence="1">1.1.1.267</ecNumber>
    </recommendedName>
    <alternativeName>
        <fullName evidence="1">1-deoxyxylulose-5-phosphate reductoisomerase</fullName>
    </alternativeName>
    <alternativeName>
        <fullName evidence="1">2-C-methyl-D-erythritol 4-phosphate synthase</fullName>
    </alternativeName>
</protein>
<proteinExistence type="inferred from homology"/>